<gene>
    <name type="primary">NR2F2</name>
    <name type="synonym">ARP1</name>
    <name type="synonym">TFCOUP2</name>
</gene>
<dbReference type="EMBL" id="M64497">
    <property type="protein sequence ID" value="AAA86429.1"/>
    <property type="molecule type" value="mRNA"/>
</dbReference>
<dbReference type="EMBL" id="U60477">
    <property type="protein sequence ID" value="AAB09475.1"/>
    <property type="molecule type" value="Genomic_DNA"/>
</dbReference>
<dbReference type="EMBL" id="AB307711">
    <property type="protein sequence ID" value="BAH02302.1"/>
    <property type="molecule type" value="mRNA"/>
</dbReference>
<dbReference type="EMBL" id="FM208183">
    <property type="protein sequence ID" value="CAR63888.1"/>
    <property type="molecule type" value="mRNA"/>
</dbReference>
<dbReference type="EMBL" id="AK298824">
    <property type="protein sequence ID" value="BAG60954.1"/>
    <property type="molecule type" value="mRNA"/>
</dbReference>
<dbReference type="EMBL" id="AK301595">
    <property type="protein sequence ID" value="BAG63083.1"/>
    <property type="molecule type" value="mRNA"/>
</dbReference>
<dbReference type="EMBL" id="AK316086">
    <property type="protein sequence ID" value="BAH14457.1"/>
    <property type="molecule type" value="mRNA"/>
</dbReference>
<dbReference type="EMBL" id="HQ692849">
    <property type="protein sequence ID" value="ADZ17360.1"/>
    <property type="molecule type" value="mRNA"/>
</dbReference>
<dbReference type="EMBL" id="HQ692850">
    <property type="protein sequence ID" value="ADZ17361.1"/>
    <property type="molecule type" value="mRNA"/>
</dbReference>
<dbReference type="EMBL" id="AC016251">
    <property type="status" value="NOT_ANNOTATED_CDS"/>
    <property type="molecule type" value="Genomic_DNA"/>
</dbReference>
<dbReference type="EMBL" id="CH471101">
    <property type="protein sequence ID" value="EAX02195.1"/>
    <property type="molecule type" value="Genomic_DNA"/>
</dbReference>
<dbReference type="EMBL" id="CH471101">
    <property type="protein sequence ID" value="EAX02196.1"/>
    <property type="molecule type" value="Genomic_DNA"/>
</dbReference>
<dbReference type="EMBL" id="CH471101">
    <property type="protein sequence ID" value="EAX02197.1"/>
    <property type="molecule type" value="Genomic_DNA"/>
</dbReference>
<dbReference type="EMBL" id="BC014664">
    <property type="protein sequence ID" value="AAH14664.1"/>
    <property type="molecule type" value="mRNA"/>
</dbReference>
<dbReference type="EMBL" id="BC042897">
    <property type="protein sequence ID" value="AAH42897.1"/>
    <property type="molecule type" value="mRNA"/>
</dbReference>
<dbReference type="EMBL" id="BC106083">
    <property type="protein sequence ID" value="AAI06084.1"/>
    <property type="molecule type" value="mRNA"/>
</dbReference>
<dbReference type="EMBL" id="M62760">
    <property type="protein sequence ID" value="AAA21479.1"/>
    <property type="molecule type" value="mRNA"/>
</dbReference>
<dbReference type="CCDS" id="CCDS10375.1">
    <molecule id="P24468-1"/>
</dbReference>
<dbReference type="CCDS" id="CCDS45358.1">
    <molecule id="P24468-2"/>
</dbReference>
<dbReference type="CCDS" id="CCDS45359.1">
    <molecule id="P24468-3"/>
</dbReference>
<dbReference type="PIR" id="A37133">
    <property type="entry name" value="A37133"/>
</dbReference>
<dbReference type="RefSeq" id="NP_001138627.1">
    <molecule id="P24468-2"/>
    <property type="nucleotide sequence ID" value="NM_001145155.2"/>
</dbReference>
<dbReference type="RefSeq" id="NP_001138628.1">
    <molecule id="P24468-3"/>
    <property type="nucleotide sequence ID" value="NM_001145156.1"/>
</dbReference>
<dbReference type="RefSeq" id="NP_001138629.1">
    <molecule id="P24468-3"/>
    <property type="nucleotide sequence ID" value="NM_001145157.2"/>
</dbReference>
<dbReference type="RefSeq" id="NP_066285.1">
    <molecule id="P24468-1"/>
    <property type="nucleotide sequence ID" value="NM_021005.4"/>
</dbReference>
<dbReference type="PDB" id="3CJW">
    <property type="method" value="X-ray"/>
    <property type="resolution" value="1.48 A"/>
    <property type="chains" value="A=175-414"/>
</dbReference>
<dbReference type="PDBsum" id="3CJW"/>
<dbReference type="SMR" id="P24468"/>
<dbReference type="BioGRID" id="112884">
    <property type="interactions" value="138"/>
</dbReference>
<dbReference type="CORUM" id="P24468"/>
<dbReference type="DIP" id="DIP-29713N"/>
<dbReference type="FunCoup" id="P24468">
    <property type="interactions" value="3786"/>
</dbReference>
<dbReference type="IntAct" id="P24468">
    <property type="interactions" value="107"/>
</dbReference>
<dbReference type="MINT" id="P24468"/>
<dbReference type="STRING" id="9606.ENSP00000377721"/>
<dbReference type="BindingDB" id="P24468"/>
<dbReference type="ChEMBL" id="CHEMBL1961790"/>
<dbReference type="GlyGen" id="P24468">
    <property type="glycosylation" value="2 sites, 1 O-linked glycan (1 site)"/>
</dbReference>
<dbReference type="iPTMnet" id="P24468"/>
<dbReference type="PhosphoSitePlus" id="P24468"/>
<dbReference type="BioMuta" id="NR2F2"/>
<dbReference type="DMDM" id="114203"/>
<dbReference type="jPOST" id="P24468"/>
<dbReference type="MassIVE" id="P24468"/>
<dbReference type="PaxDb" id="9606-ENSP00000377721"/>
<dbReference type="PeptideAtlas" id="P24468"/>
<dbReference type="ProteomicsDB" id="54206">
    <molecule id="P24468-1"/>
</dbReference>
<dbReference type="ProteomicsDB" id="54207">
    <molecule id="P24468-2"/>
</dbReference>
<dbReference type="ProteomicsDB" id="54208">
    <molecule id="P24468-3"/>
</dbReference>
<dbReference type="Pumba" id="P24468"/>
<dbReference type="Antibodypedia" id="16260">
    <property type="antibodies" value="313 antibodies from 34 providers"/>
</dbReference>
<dbReference type="DNASU" id="7026"/>
<dbReference type="Ensembl" id="ENST00000394166.8">
    <molecule id="P24468-1"/>
    <property type="protein sequence ID" value="ENSP00000377721.3"/>
    <property type="gene ID" value="ENSG00000185551.15"/>
</dbReference>
<dbReference type="Ensembl" id="ENST00000394171.6">
    <molecule id="P24468-3"/>
    <property type="protein sequence ID" value="ENSP00000377726.2"/>
    <property type="gene ID" value="ENSG00000185551.15"/>
</dbReference>
<dbReference type="Ensembl" id="ENST00000421109.6">
    <molecule id="P24468-2"/>
    <property type="protein sequence ID" value="ENSP00000401674.2"/>
    <property type="gene ID" value="ENSG00000185551.15"/>
</dbReference>
<dbReference type="Ensembl" id="ENST00000453270.2">
    <molecule id="P24468-3"/>
    <property type="protein sequence ID" value="ENSP00000389853.2"/>
    <property type="gene ID" value="ENSG00000185551.15"/>
</dbReference>
<dbReference type="GeneID" id="7026"/>
<dbReference type="KEGG" id="hsa:7026"/>
<dbReference type="MANE-Select" id="ENST00000394166.8">
    <property type="protein sequence ID" value="ENSP00000377721.3"/>
    <property type="RefSeq nucleotide sequence ID" value="NM_021005.4"/>
    <property type="RefSeq protein sequence ID" value="NP_066285.1"/>
</dbReference>
<dbReference type="UCSC" id="uc002btp.4">
    <molecule id="P24468-1"/>
    <property type="organism name" value="human"/>
</dbReference>
<dbReference type="AGR" id="HGNC:7976"/>
<dbReference type="CTD" id="7026"/>
<dbReference type="DisGeNET" id="7026"/>
<dbReference type="GeneCards" id="NR2F2"/>
<dbReference type="HGNC" id="HGNC:7976">
    <property type="gene designation" value="NR2F2"/>
</dbReference>
<dbReference type="HPA" id="ENSG00000185551">
    <property type="expression patterns" value="Low tissue specificity"/>
</dbReference>
<dbReference type="MalaCards" id="NR2F2"/>
<dbReference type="MIM" id="107773">
    <property type="type" value="gene"/>
</dbReference>
<dbReference type="MIM" id="615779">
    <property type="type" value="phenotype"/>
</dbReference>
<dbReference type="MIM" id="618901">
    <property type="type" value="phenotype"/>
</dbReference>
<dbReference type="neXtProt" id="NX_P24468"/>
<dbReference type="OpenTargets" id="ENSG00000185551"/>
<dbReference type="Orphanet" id="99067">
    <property type="disease" value="Complete atrioventricular septal defect with ventricular hypoplasia"/>
</dbReference>
<dbReference type="Orphanet" id="99068">
    <property type="disease" value="Complete atrioventricular septal defect-tetralogy of Fallot"/>
</dbReference>
<dbReference type="PharmGKB" id="PA31759"/>
<dbReference type="VEuPathDB" id="HostDB:ENSG00000185551"/>
<dbReference type="eggNOG" id="KOG3575">
    <property type="taxonomic scope" value="Eukaryota"/>
</dbReference>
<dbReference type="GeneTree" id="ENSGT00940000157540"/>
<dbReference type="HOGENOM" id="CLU_007368_20_1_1"/>
<dbReference type="InParanoid" id="P24468"/>
<dbReference type="OMA" id="QHIECTV"/>
<dbReference type="OrthoDB" id="5873264at2759"/>
<dbReference type="PAN-GO" id="P24468">
    <property type="GO annotations" value="6 GO annotations based on evolutionary models"/>
</dbReference>
<dbReference type="PhylomeDB" id="P24468"/>
<dbReference type="TreeFam" id="TF352097"/>
<dbReference type="PathwayCommons" id="P24468"/>
<dbReference type="Reactome" id="R-HSA-381340">
    <property type="pathway name" value="Transcriptional regulation of white adipocyte differentiation"/>
</dbReference>
<dbReference type="SignaLink" id="P24468"/>
<dbReference type="SIGNOR" id="P24468"/>
<dbReference type="BioGRID-ORCS" id="7026">
    <property type="hits" value="40 hits in 1185 CRISPR screens"/>
</dbReference>
<dbReference type="ChiTaRS" id="NR2F2">
    <property type="organism name" value="human"/>
</dbReference>
<dbReference type="EvolutionaryTrace" id="P24468"/>
<dbReference type="GeneWiki" id="COUP-TFII"/>
<dbReference type="GenomeRNAi" id="7026"/>
<dbReference type="Pharos" id="P24468">
    <property type="development level" value="Tchem"/>
</dbReference>
<dbReference type="PRO" id="PR:P24468"/>
<dbReference type="Proteomes" id="UP000005640">
    <property type="component" value="Chromosome 15"/>
</dbReference>
<dbReference type="RNAct" id="P24468">
    <property type="molecule type" value="protein"/>
</dbReference>
<dbReference type="Bgee" id="ENSG00000185551">
    <property type="expression patterns" value="Expressed in urethra and 216 other cell types or tissues"/>
</dbReference>
<dbReference type="ExpressionAtlas" id="P24468">
    <property type="expression patterns" value="baseline and differential"/>
</dbReference>
<dbReference type="GO" id="GO:0005829">
    <property type="term" value="C:cytosol"/>
    <property type="evidence" value="ECO:0000314"/>
    <property type="project" value="HPA"/>
</dbReference>
<dbReference type="GO" id="GO:0005654">
    <property type="term" value="C:nucleoplasm"/>
    <property type="evidence" value="ECO:0000314"/>
    <property type="project" value="HPA"/>
</dbReference>
<dbReference type="GO" id="GO:0005634">
    <property type="term" value="C:nucleus"/>
    <property type="evidence" value="ECO:0000314"/>
    <property type="project" value="BHF-UCL"/>
</dbReference>
<dbReference type="GO" id="GO:0003700">
    <property type="term" value="F:DNA-binding transcription factor activity"/>
    <property type="evidence" value="ECO:0000314"/>
    <property type="project" value="UniProtKB"/>
</dbReference>
<dbReference type="GO" id="GO:0001227">
    <property type="term" value="F:DNA-binding transcription repressor activity, RNA polymerase II-specific"/>
    <property type="evidence" value="ECO:0000315"/>
    <property type="project" value="BHF-UCL"/>
</dbReference>
<dbReference type="GO" id="GO:0004879">
    <property type="term" value="F:nuclear receptor activity"/>
    <property type="evidence" value="ECO:0000314"/>
    <property type="project" value="UniProtKB"/>
</dbReference>
<dbReference type="GO" id="GO:0042803">
    <property type="term" value="F:protein homodimerization activity"/>
    <property type="evidence" value="ECO:0000353"/>
    <property type="project" value="UniProtKB"/>
</dbReference>
<dbReference type="GO" id="GO:0001972">
    <property type="term" value="F:retinoic acid binding"/>
    <property type="evidence" value="ECO:0000314"/>
    <property type="project" value="UniProtKB"/>
</dbReference>
<dbReference type="GO" id="GO:0000978">
    <property type="term" value="F:RNA polymerase II cis-regulatory region sequence-specific DNA binding"/>
    <property type="evidence" value="ECO:0000318"/>
    <property type="project" value="GO_Central"/>
</dbReference>
<dbReference type="GO" id="GO:0043565">
    <property type="term" value="F:sequence-specific DNA binding"/>
    <property type="evidence" value="ECO:0000314"/>
    <property type="project" value="UniProtKB"/>
</dbReference>
<dbReference type="GO" id="GO:0008270">
    <property type="term" value="F:zinc ion binding"/>
    <property type="evidence" value="ECO:0007669"/>
    <property type="project" value="UniProtKB-KW"/>
</dbReference>
<dbReference type="GO" id="GO:0009952">
    <property type="term" value="P:anterior/posterior pattern specification"/>
    <property type="evidence" value="ECO:0007669"/>
    <property type="project" value="Ensembl"/>
</dbReference>
<dbReference type="GO" id="GO:0048514">
    <property type="term" value="P:blood vessel morphogenesis"/>
    <property type="evidence" value="ECO:0007669"/>
    <property type="project" value="Ensembl"/>
</dbReference>
<dbReference type="GO" id="GO:0030154">
    <property type="term" value="P:cell differentiation"/>
    <property type="evidence" value="ECO:0000318"/>
    <property type="project" value="GO_Central"/>
</dbReference>
<dbReference type="GO" id="GO:0008585">
    <property type="term" value="P:female gonad development"/>
    <property type="evidence" value="ECO:0000315"/>
    <property type="project" value="UniProtKB"/>
</dbReference>
<dbReference type="GO" id="GO:0009566">
    <property type="term" value="P:fertilization"/>
    <property type="evidence" value="ECO:0007669"/>
    <property type="project" value="Ensembl"/>
</dbReference>
<dbReference type="GO" id="GO:0030900">
    <property type="term" value="P:forebrain development"/>
    <property type="evidence" value="ECO:0007669"/>
    <property type="project" value="Ensembl"/>
</dbReference>
<dbReference type="GO" id="GO:1904936">
    <property type="term" value="P:interneuron migration"/>
    <property type="evidence" value="ECO:0007669"/>
    <property type="project" value="Ensembl"/>
</dbReference>
<dbReference type="GO" id="GO:0060838">
    <property type="term" value="P:lymphatic endothelial cell fate commitment"/>
    <property type="evidence" value="ECO:0000315"/>
    <property type="project" value="BHF-UCL"/>
</dbReference>
<dbReference type="GO" id="GO:0001893">
    <property type="term" value="P:maternal placenta development"/>
    <property type="evidence" value="ECO:0007669"/>
    <property type="project" value="Ensembl"/>
</dbReference>
<dbReference type="GO" id="GO:0010596">
    <property type="term" value="P:negative regulation of endothelial cell migration"/>
    <property type="evidence" value="ECO:0000315"/>
    <property type="project" value="BHF-UCL"/>
</dbReference>
<dbReference type="GO" id="GO:0001937">
    <property type="term" value="P:negative regulation of endothelial cell proliferation"/>
    <property type="evidence" value="ECO:0000315"/>
    <property type="project" value="BHF-UCL"/>
</dbReference>
<dbReference type="GO" id="GO:0000122">
    <property type="term" value="P:negative regulation of transcription by RNA polymerase II"/>
    <property type="evidence" value="ECO:0000314"/>
    <property type="project" value="UniProtKB"/>
</dbReference>
<dbReference type="GO" id="GO:1900747">
    <property type="term" value="P:negative regulation of vascular endothelial growth factor signaling pathway"/>
    <property type="evidence" value="ECO:0000315"/>
    <property type="project" value="BHF-UCL"/>
</dbReference>
<dbReference type="GO" id="GO:0007399">
    <property type="term" value="P:nervous system development"/>
    <property type="evidence" value="ECO:0000318"/>
    <property type="project" value="GO_Central"/>
</dbReference>
<dbReference type="GO" id="GO:0060674">
    <property type="term" value="P:placenta blood vessel development"/>
    <property type="evidence" value="ECO:0007669"/>
    <property type="project" value="Ensembl"/>
</dbReference>
<dbReference type="GO" id="GO:0045893">
    <property type="term" value="P:positive regulation of DNA-templated transcription"/>
    <property type="evidence" value="ECO:0000314"/>
    <property type="project" value="UniProtKB"/>
</dbReference>
<dbReference type="GO" id="GO:0003084">
    <property type="term" value="P:positive regulation of systemic arterial blood pressure"/>
    <property type="evidence" value="ECO:0007669"/>
    <property type="project" value="Ensembl"/>
</dbReference>
<dbReference type="GO" id="GO:0045944">
    <property type="term" value="P:positive regulation of transcription by RNA polymerase II"/>
    <property type="evidence" value="ECO:0000315"/>
    <property type="project" value="BHF-UCL"/>
</dbReference>
<dbReference type="GO" id="GO:0009956">
    <property type="term" value="P:radial pattern formation"/>
    <property type="evidence" value="ECO:0007669"/>
    <property type="project" value="Ensembl"/>
</dbReference>
<dbReference type="GO" id="GO:0006357">
    <property type="term" value="P:regulation of transcription by RNA polymerase II"/>
    <property type="evidence" value="ECO:0000304"/>
    <property type="project" value="ProtInc"/>
</dbReference>
<dbReference type="GO" id="GO:0032355">
    <property type="term" value="P:response to estradiol"/>
    <property type="evidence" value="ECO:0007669"/>
    <property type="project" value="Ensembl"/>
</dbReference>
<dbReference type="GO" id="GO:0007519">
    <property type="term" value="P:skeletal muscle tissue development"/>
    <property type="evidence" value="ECO:0007669"/>
    <property type="project" value="Ensembl"/>
</dbReference>
<dbReference type="GO" id="GO:0060707">
    <property type="term" value="P:trophoblast giant cell differentiation"/>
    <property type="evidence" value="ECO:0007669"/>
    <property type="project" value="Ensembl"/>
</dbReference>
<dbReference type="CDD" id="cd06958">
    <property type="entry name" value="NR_DBD_COUP_TF"/>
    <property type="match status" value="1"/>
</dbReference>
<dbReference type="CDD" id="cd06948">
    <property type="entry name" value="NR_LBD_COUP-TF"/>
    <property type="match status" value="1"/>
</dbReference>
<dbReference type="FunFam" id="1.10.565.10:FF:000003">
    <property type="entry name" value="Coup transcription factor 2 isoform 1"/>
    <property type="match status" value="1"/>
</dbReference>
<dbReference type="FunFam" id="3.30.50.10:FF:000016">
    <property type="entry name" value="Nuclear receptor subfamily 2 group F member 1"/>
    <property type="match status" value="1"/>
</dbReference>
<dbReference type="Gene3D" id="3.30.50.10">
    <property type="entry name" value="Erythroid Transcription Factor GATA-1, subunit A"/>
    <property type="match status" value="1"/>
</dbReference>
<dbReference type="Gene3D" id="1.10.565.10">
    <property type="entry name" value="Retinoid X Receptor"/>
    <property type="match status" value="1"/>
</dbReference>
<dbReference type="InterPro" id="IPR035500">
    <property type="entry name" value="NHR-like_dom_sf"/>
</dbReference>
<dbReference type="InterPro" id="IPR000536">
    <property type="entry name" value="Nucl_hrmn_rcpt_lig-bd"/>
</dbReference>
<dbReference type="InterPro" id="IPR050274">
    <property type="entry name" value="Nuclear_hormone_rcpt_NR2"/>
</dbReference>
<dbReference type="InterPro" id="IPR001723">
    <property type="entry name" value="Nuclear_hrmn_rcpt"/>
</dbReference>
<dbReference type="InterPro" id="IPR001628">
    <property type="entry name" value="Znf_hrmn_rcpt"/>
</dbReference>
<dbReference type="InterPro" id="IPR013088">
    <property type="entry name" value="Znf_NHR/GATA"/>
</dbReference>
<dbReference type="PANTHER" id="PTHR24083">
    <property type="entry name" value="NUCLEAR HORMONE RECEPTOR"/>
    <property type="match status" value="1"/>
</dbReference>
<dbReference type="Pfam" id="PF00104">
    <property type="entry name" value="Hormone_recep"/>
    <property type="match status" value="1"/>
</dbReference>
<dbReference type="Pfam" id="PF00105">
    <property type="entry name" value="zf-C4"/>
    <property type="match status" value="1"/>
</dbReference>
<dbReference type="PRINTS" id="PR01282">
    <property type="entry name" value="COUPTNFACTOR"/>
</dbReference>
<dbReference type="PRINTS" id="PR00398">
    <property type="entry name" value="STRDHORMONER"/>
</dbReference>
<dbReference type="PRINTS" id="PR00047">
    <property type="entry name" value="STROIDFINGER"/>
</dbReference>
<dbReference type="SMART" id="SM00430">
    <property type="entry name" value="HOLI"/>
    <property type="match status" value="1"/>
</dbReference>
<dbReference type="SMART" id="SM00399">
    <property type="entry name" value="ZnF_C4"/>
    <property type="match status" value="1"/>
</dbReference>
<dbReference type="SUPFAM" id="SSF57716">
    <property type="entry name" value="Glucocorticoid receptor-like (DNA-binding domain)"/>
    <property type="match status" value="1"/>
</dbReference>
<dbReference type="SUPFAM" id="SSF48508">
    <property type="entry name" value="Nuclear receptor ligand-binding domain"/>
    <property type="match status" value="1"/>
</dbReference>
<dbReference type="PROSITE" id="PS51843">
    <property type="entry name" value="NR_LBD"/>
    <property type="match status" value="1"/>
</dbReference>
<dbReference type="PROSITE" id="PS00031">
    <property type="entry name" value="NUCLEAR_REC_DBD_1"/>
    <property type="match status" value="1"/>
</dbReference>
<dbReference type="PROSITE" id="PS51030">
    <property type="entry name" value="NUCLEAR_REC_DBD_2"/>
    <property type="match status" value="1"/>
</dbReference>
<proteinExistence type="evidence at protein level"/>
<organism>
    <name type="scientific">Homo sapiens</name>
    <name type="common">Human</name>
    <dbReference type="NCBI Taxonomy" id="9606"/>
    <lineage>
        <taxon>Eukaryota</taxon>
        <taxon>Metazoa</taxon>
        <taxon>Chordata</taxon>
        <taxon>Craniata</taxon>
        <taxon>Vertebrata</taxon>
        <taxon>Euteleostomi</taxon>
        <taxon>Mammalia</taxon>
        <taxon>Eutheria</taxon>
        <taxon>Euarchontoglires</taxon>
        <taxon>Primates</taxon>
        <taxon>Haplorrhini</taxon>
        <taxon>Catarrhini</taxon>
        <taxon>Hominidae</taxon>
        <taxon>Homo</taxon>
    </lineage>
</organism>
<accession>P24468</accession>
<accession>B4DQJ2</accession>
<accession>B6ZGU1</accession>
<accession>Q03754</accession>
<accession>Q3KQR7</accession>
<protein>
    <recommendedName>
        <fullName>COUP transcription factor 2</fullName>
        <shortName>COUP-TF2</shortName>
    </recommendedName>
    <alternativeName>
        <fullName>Apolipoprotein A-I regulatory protein 1</fullName>
        <shortName>ARP-1</shortName>
    </alternativeName>
    <alternativeName>
        <fullName>COUP transcription factor II</fullName>
        <shortName>COUP-TF II</shortName>
    </alternativeName>
    <alternativeName>
        <fullName>Nuclear receptor subfamily 2 group F member 2</fullName>
    </alternativeName>
</protein>
<name>COT2_HUMAN</name>
<feature type="chain" id="PRO_0000053606" description="COUP transcription factor 2">
    <location>
        <begin position="1"/>
        <end position="414"/>
    </location>
</feature>
<feature type="domain" description="NR LBD" evidence="3">
    <location>
        <begin position="177"/>
        <end position="403"/>
    </location>
</feature>
<feature type="DNA-binding region" description="Nuclear receptor" evidence="2">
    <location>
        <begin position="76"/>
        <end position="151"/>
    </location>
</feature>
<feature type="zinc finger region" description="NR C4-type" evidence="2">
    <location>
        <begin position="79"/>
        <end position="99"/>
    </location>
</feature>
<feature type="zinc finger region" description="NR C4-type" evidence="2">
    <location>
        <begin position="115"/>
        <end position="139"/>
    </location>
</feature>
<feature type="region of interest" description="Disordered" evidence="4">
    <location>
        <begin position="1"/>
        <end position="72"/>
    </location>
</feature>
<feature type="region of interest" description="Interaction with ZFPM2" evidence="1">
    <location>
        <begin position="117"/>
        <end position="414"/>
    </location>
</feature>
<feature type="region of interest" description="Important for dimerization">
    <location>
        <begin position="337"/>
        <end position="414"/>
    </location>
</feature>
<feature type="compositionally biased region" description="Pro residues" evidence="4">
    <location>
        <begin position="27"/>
        <end position="37"/>
    </location>
</feature>
<feature type="compositionally biased region" description="Low complexity" evidence="4">
    <location>
        <begin position="38"/>
        <end position="57"/>
    </location>
</feature>
<feature type="compositionally biased region" description="Gly residues" evidence="4">
    <location>
        <begin position="58"/>
        <end position="67"/>
    </location>
</feature>
<feature type="modified residue" description="Phosphothreonine" evidence="15">
    <location>
        <position position="51"/>
    </location>
</feature>
<feature type="splice variant" id="VSP_043897" description="In isoform 3." evidence="10 13">
    <location>
        <begin position="1"/>
        <end position="153"/>
    </location>
</feature>
<feature type="splice variant" id="VSP_042630" description="In isoform 2." evidence="10 11 12 13">
    <original>MAMVVSTWRDPQDEVPGSQGSQASQAPPVPGPPPGAPHTPQTPGQGGPASTPAQTAAGGQGGPGGPGSDKQQQQQHIECVVCGDKSSGKHYGQFTCEGCKSFFKRSVRRNLSYTCRANRNCPIDQHHRNQCQYCRLKKCLKVGMRRE</original>
    <variation>MQAVWDLEQGKYGF</variation>
    <location>
        <begin position="1"/>
        <end position="147"/>
    </location>
</feature>
<feature type="sequence variant" id="VAR_071766" description="In CHTD4; the mutation results in reduced transcription activation of the EGR1 promoter; does not affect transcription activation of the APOB FT promoter." evidence="7">
    <original>Q</original>
    <variation>QQ</variation>
    <location>
        <position position="75"/>
    </location>
</feature>
<feature type="sequence variant" id="VAR_071767" description="In CHTD4." evidence="7">
    <original>D</original>
    <variation>V</variation>
    <location>
        <position position="170"/>
    </location>
</feature>
<feature type="sequence variant" id="VAR_071768" description="In CHTD4; the mutation results in increased transcription activation of the EGR1 promoter; transcription activation of the APOB promoter is decreased; dbSNP:rs587777372." evidence="7">
    <original>N</original>
    <variation>I</variation>
    <location>
        <position position="205"/>
    </location>
</feature>
<feature type="sequence variant" id="VAR_071769" description="In CHTD4." evidence="7">
    <original>E</original>
    <variation>D</variation>
    <location>
        <position position="251"/>
    </location>
</feature>
<feature type="sequence variant" id="VAR_071770" description="In CHTD4; the mutation results in reduced transcriptional activity; dbSNP:rs587777371." evidence="7">
    <original>S</original>
    <variation>Y</variation>
    <location>
        <position position="341"/>
    </location>
</feature>
<feature type="sequence variant" id="VAR_071771" description="In CHTD4; dbSNP:rs201527820." evidence="7">
    <original>A</original>
    <variation>S</variation>
    <location>
        <position position="412"/>
    </location>
</feature>
<feature type="mutagenesis site" description="Reduces transcription activation by 40%; when associated with R-398." evidence="5">
    <original>R</original>
    <variation>E</variation>
    <location>
        <position position="228"/>
    </location>
</feature>
<feature type="mutagenesis site" description="Reduces transcription activation by 50%; when associated with A-250." evidence="5">
    <original>W</original>
    <variation>A</variation>
    <location>
        <position position="249"/>
    </location>
</feature>
<feature type="mutagenesis site" description="Reduces transcription activation by 50%; when associated with A-249." evidence="5">
    <original>S</original>
    <variation>A</variation>
    <location>
        <position position="250"/>
    </location>
</feature>
<feature type="mutagenesis site" description="Reduces transcription activation by 50%." evidence="5">
    <original>S</original>
    <variation>W</variation>
    <location>
        <position position="250"/>
    </location>
</feature>
<feature type="mutagenesis site" description="Reduces transcription activation by 50%." evidence="5">
    <original>FV</original>
    <variation>AA</variation>
    <location>
        <begin position="253"/>
        <end position="254"/>
    </location>
</feature>
<feature type="mutagenesis site" description="Reduces transcription activation by 50%.">
    <original>LL</original>
    <variation>AA</variation>
    <location>
        <begin position="269"/>
        <end position="270"/>
    </location>
</feature>
<feature type="mutagenesis site" description="Reduces transcription activation by 80%." evidence="5">
    <original>LL</original>
    <variation>AA</variation>
    <location>
        <begin position="364"/>
        <end position="365"/>
    </location>
</feature>
<feature type="mutagenesis site" description="Reduces transcription activation by 40%; when associated with E-228." evidence="5">
    <original>D</original>
    <variation>R</variation>
    <location>
        <position position="398"/>
    </location>
</feature>
<feature type="helix" evidence="16">
    <location>
        <begin position="175"/>
        <end position="187"/>
    </location>
</feature>
<feature type="helix" evidence="16">
    <location>
        <begin position="212"/>
        <end position="229"/>
    </location>
</feature>
<feature type="strand" evidence="16">
    <location>
        <begin position="230"/>
        <end position="232"/>
    </location>
</feature>
<feature type="helix" evidence="16">
    <location>
        <begin position="233"/>
        <end position="235"/>
    </location>
</feature>
<feature type="helix" evidence="16">
    <location>
        <begin position="238"/>
        <end position="260"/>
    </location>
</feature>
<feature type="helix" evidence="16">
    <location>
        <begin position="290"/>
        <end position="304"/>
    </location>
</feature>
<feature type="helix" evidence="16">
    <location>
        <begin position="309"/>
        <end position="320"/>
    </location>
</feature>
<feature type="helix" evidence="16">
    <location>
        <begin position="331"/>
        <end position="352"/>
    </location>
</feature>
<feature type="helix" evidence="16">
    <location>
        <begin position="359"/>
        <end position="364"/>
    </location>
</feature>
<feature type="helix" evidence="16">
    <location>
        <begin position="367"/>
        <end position="372"/>
    </location>
</feature>
<feature type="helix" evidence="16">
    <location>
        <begin position="375"/>
        <end position="382"/>
    </location>
</feature>
<feature type="helix" evidence="16">
    <location>
        <begin position="384"/>
        <end position="387"/>
    </location>
</feature>
<feature type="helix" evidence="16">
    <location>
        <begin position="392"/>
        <end position="394"/>
    </location>
</feature>
<feature type="helix" evidence="16">
    <location>
        <begin position="396"/>
        <end position="400"/>
    </location>
</feature>
<comment type="function">
    <text evidence="5 6 8 9">Ligand-activated transcription factor. Activated by high concentrations of 9-cis-retinoic acid and all-trans-retinoic acid, but not by dexamethasone, cortisol or progesterone (in vitro). Regulation of the apolipoprotein A-I gene transcription. Binds to DNA site A. May be required to establish ovary identity during early gonad development (PubMed:29478779).</text>
</comment>
<comment type="subunit">
    <text evidence="1">Interacts with SQSTM1 (By similarity). Binds DNA as a dimer; homodimer or heterodimer with NR2F6. Interacts with NCOA1, NCOA2, NCOA3 and PPARGC1A. Interacts with ZFPM2 (By similarity).</text>
</comment>
<comment type="interaction">
    <interactant intactId="EBI-2795198">
        <id>P24468</id>
    </interactant>
    <interactant intactId="EBI-2681496">
        <id>P10588</id>
        <label>NR2F6</label>
    </interactant>
    <organismsDiffer>false</organismsDiffer>
    <experiments>3</experiments>
</comment>
<comment type="interaction">
    <interactant intactId="EBI-2795198">
        <id>P24468</id>
    </interactant>
    <interactant intactId="EBI-347263">
        <id>Q13485</id>
        <label>SMAD4</label>
    </interactant>
    <organismsDiffer>false</organismsDiffer>
    <experiments>4</experiments>
</comment>
<comment type="subcellular location">
    <subcellularLocation>
        <location>Nucleus</location>
    </subcellularLocation>
</comment>
<comment type="alternative products">
    <event type="alternative splicing"/>
    <isoform>
        <id>P24468-1</id>
        <name>1</name>
        <sequence type="displayed"/>
    </isoform>
    <isoform>
        <id>P24468-2</id>
        <name>2</name>
        <sequence type="described" ref="VSP_042630"/>
    </isoform>
    <isoform>
        <id>P24468-3</id>
        <name>3</name>
        <sequence type="described" ref="VSP_043897"/>
    </isoform>
</comment>
<comment type="tissue specificity">
    <text evidence="8">Ubiquitous. Expressed in the stromal cells of developing fetal ovaries (PubMed:29478779).</text>
</comment>
<comment type="disease" evidence="7">
    <disease id="DI-04085">
        <name>Congenital heart defects, multiple types, 4</name>
        <acronym>CHTD4</acronym>
        <description>A disorder characterized by congenital developmental abnormalities involving structures of the heart. Common defects include transposition of the great arteries, aortic stenosis, atrial septal defect, ventricular septal defect, pulmonic stenosis, and patent ductus arteriosus. Some patients also have cardiac arrhythmias, which may be due to the anatomic defect itself or to surgical interventions.</description>
        <dbReference type="MIM" id="615779"/>
    </disease>
    <text>The disease is caused by variants affecting the gene represented in this entry.</text>
</comment>
<comment type="disease" evidence="8">
    <disease id="DI-05853">
        <name>46,XX sex reversal 5</name>
        <acronym>SRXX5</acronym>
        <description>A condition in which male gonads develop in a genetic female (female to male sex reversal). Additional features in SRXX5 patients are congenital heart disease, congenital diaphragmatic hernia, and blepharophimosis-ptosis-epicanthus inversus syndrome. SRXX5 inheritance is autosomal dominant.</description>
        <dbReference type="MIM" id="618901"/>
    </disease>
    <text>The disease is caused by variants affecting the gene represented in this entry.</text>
</comment>
<comment type="similarity">
    <text evidence="14">Belongs to the nuclear hormone receptor family. NR2 subfamily.</text>
</comment>
<reference key="1">
    <citation type="journal article" date="1991" name="Science">
        <title>Regulation of the apolipoprotein AI gene by ARP-1, a novel member of the steroid receptor superfamily.</title>
        <authorList>
            <person name="Ladias J.A.A."/>
            <person name="Karathanasis S.K."/>
        </authorList>
    </citation>
    <scope>NUCLEOTIDE SEQUENCE [MRNA] (ISOFORM 1)</scope>
    <scope>FUNCTION</scope>
    <scope>SUBUNIT</scope>
</reference>
<reference key="2">
    <citation type="submission" date="1996-10" db="EMBL/GenBank/DDBJ databases">
        <authorList>
            <person name="Speckmayer R.W.M."/>
            <person name="Paulweber B."/>
            <person name="Sandhofer F."/>
        </authorList>
    </citation>
    <scope>NUCLEOTIDE SEQUENCE [GENOMIC DNA]</scope>
</reference>
<reference key="3">
    <citation type="journal article" date="2008" name="FEBS Lett.">
        <title>DNA-binding profiling of human hormone nuclear receptors via fluorescence correlation spectroscopy in a cell-free system.</title>
        <authorList>
            <person name="Kobayashi T."/>
            <person name="Kodani Y."/>
            <person name="Nozawa A."/>
            <person name="Endo Y."/>
            <person name="Sawasaki T."/>
        </authorList>
    </citation>
    <scope>NUCLEOTIDE SEQUENCE [MRNA] (ISOFORM 1)</scope>
    <scope>DNA-BINDING</scope>
</reference>
<reference key="4">
    <citation type="submission" date="2008-08" db="EMBL/GenBank/DDBJ databases">
        <title>Characterisation of a new, DNA binding domain deficient chicken ovalbumin upstream promoter- transcription factor IIdelta isoform in the human brain.</title>
        <authorList>
            <person name="Schote A.B."/>
            <person name="Bechet T."/>
            <person name="Pirrotte P."/>
            <person name="Turner J.D."/>
            <person name="Muller C.P."/>
        </authorList>
    </citation>
    <scope>NUCLEOTIDE SEQUENCE [MRNA] (ISOFORM 2)</scope>
    <source>
        <tissue>Liver</tissue>
    </source>
</reference>
<reference key="5">
    <citation type="journal article" date="2004" name="Nat. Genet.">
        <title>Complete sequencing and characterization of 21,243 full-length human cDNAs.</title>
        <authorList>
            <person name="Ota T."/>
            <person name="Suzuki Y."/>
            <person name="Nishikawa T."/>
            <person name="Otsuki T."/>
            <person name="Sugiyama T."/>
            <person name="Irie R."/>
            <person name="Wakamatsu A."/>
            <person name="Hayashi K."/>
            <person name="Sato H."/>
            <person name="Nagai K."/>
            <person name="Kimura K."/>
            <person name="Makita H."/>
            <person name="Sekine M."/>
            <person name="Obayashi M."/>
            <person name="Nishi T."/>
            <person name="Shibahara T."/>
            <person name="Tanaka T."/>
            <person name="Ishii S."/>
            <person name="Yamamoto J."/>
            <person name="Saito K."/>
            <person name="Kawai Y."/>
            <person name="Isono Y."/>
            <person name="Nakamura Y."/>
            <person name="Nagahari K."/>
            <person name="Murakami K."/>
            <person name="Yasuda T."/>
            <person name="Iwayanagi T."/>
            <person name="Wagatsuma M."/>
            <person name="Shiratori A."/>
            <person name="Sudo H."/>
            <person name="Hosoiri T."/>
            <person name="Kaku Y."/>
            <person name="Kodaira H."/>
            <person name="Kondo H."/>
            <person name="Sugawara M."/>
            <person name="Takahashi M."/>
            <person name="Kanda K."/>
            <person name="Yokoi T."/>
            <person name="Furuya T."/>
            <person name="Kikkawa E."/>
            <person name="Omura Y."/>
            <person name="Abe K."/>
            <person name="Kamihara K."/>
            <person name="Katsuta N."/>
            <person name="Sato K."/>
            <person name="Tanikawa M."/>
            <person name="Yamazaki M."/>
            <person name="Ninomiya K."/>
            <person name="Ishibashi T."/>
            <person name="Yamashita H."/>
            <person name="Murakawa K."/>
            <person name="Fujimori K."/>
            <person name="Tanai H."/>
            <person name="Kimata M."/>
            <person name="Watanabe M."/>
            <person name="Hiraoka S."/>
            <person name="Chiba Y."/>
            <person name="Ishida S."/>
            <person name="Ono Y."/>
            <person name="Takiguchi S."/>
            <person name="Watanabe S."/>
            <person name="Yosida M."/>
            <person name="Hotuta T."/>
            <person name="Kusano J."/>
            <person name="Kanehori K."/>
            <person name="Takahashi-Fujii A."/>
            <person name="Hara H."/>
            <person name="Tanase T.-O."/>
            <person name="Nomura Y."/>
            <person name="Togiya S."/>
            <person name="Komai F."/>
            <person name="Hara R."/>
            <person name="Takeuchi K."/>
            <person name="Arita M."/>
            <person name="Imose N."/>
            <person name="Musashino K."/>
            <person name="Yuuki H."/>
            <person name="Oshima A."/>
            <person name="Sasaki N."/>
            <person name="Aotsuka S."/>
            <person name="Yoshikawa Y."/>
            <person name="Matsunawa H."/>
            <person name="Ichihara T."/>
            <person name="Shiohata N."/>
            <person name="Sano S."/>
            <person name="Moriya S."/>
            <person name="Momiyama H."/>
            <person name="Satoh N."/>
            <person name="Takami S."/>
            <person name="Terashima Y."/>
            <person name="Suzuki O."/>
            <person name="Nakagawa S."/>
            <person name="Senoh A."/>
            <person name="Mizoguchi H."/>
            <person name="Goto Y."/>
            <person name="Shimizu F."/>
            <person name="Wakebe H."/>
            <person name="Hishigaki H."/>
            <person name="Watanabe T."/>
            <person name="Sugiyama A."/>
            <person name="Takemoto M."/>
            <person name="Kawakami B."/>
            <person name="Yamazaki M."/>
            <person name="Watanabe K."/>
            <person name="Kumagai A."/>
            <person name="Itakura S."/>
            <person name="Fukuzumi Y."/>
            <person name="Fujimori Y."/>
            <person name="Komiyama M."/>
            <person name="Tashiro H."/>
            <person name="Tanigami A."/>
            <person name="Fujiwara T."/>
            <person name="Ono T."/>
            <person name="Yamada K."/>
            <person name="Fujii Y."/>
            <person name="Ozaki K."/>
            <person name="Hirao M."/>
            <person name="Ohmori Y."/>
            <person name="Kawabata A."/>
            <person name="Hikiji T."/>
            <person name="Kobatake N."/>
            <person name="Inagaki H."/>
            <person name="Ikema Y."/>
            <person name="Okamoto S."/>
            <person name="Okitani R."/>
            <person name="Kawakami T."/>
            <person name="Noguchi S."/>
            <person name="Itoh T."/>
            <person name="Shigeta K."/>
            <person name="Senba T."/>
            <person name="Matsumura K."/>
            <person name="Nakajima Y."/>
            <person name="Mizuno T."/>
            <person name="Morinaga M."/>
            <person name="Sasaki M."/>
            <person name="Togashi T."/>
            <person name="Oyama M."/>
            <person name="Hata H."/>
            <person name="Watanabe M."/>
            <person name="Komatsu T."/>
            <person name="Mizushima-Sugano J."/>
            <person name="Satoh T."/>
            <person name="Shirai Y."/>
            <person name="Takahashi Y."/>
            <person name="Nakagawa K."/>
            <person name="Okumura K."/>
            <person name="Nagase T."/>
            <person name="Nomura N."/>
            <person name="Kikuchi H."/>
            <person name="Masuho Y."/>
            <person name="Yamashita R."/>
            <person name="Nakai K."/>
            <person name="Yada T."/>
            <person name="Nakamura Y."/>
            <person name="Ohara O."/>
            <person name="Isogai T."/>
            <person name="Sugano S."/>
        </authorList>
    </citation>
    <scope>NUCLEOTIDE SEQUENCE [LARGE SCALE MRNA] (ISOFORMS 2 AND 3)</scope>
    <source>
        <tissue>Mammary gland</tissue>
    </source>
</reference>
<reference key="6">
    <citation type="submission" date="2010-12" db="EMBL/GenBank/DDBJ databases">
        <title>Isolation of cDNA coding for multiple human nuclear receptor clones.</title>
        <authorList>
            <person name="Kaighin V.A."/>
            <person name="Martin A.L."/>
            <person name="Aronstam R.S."/>
        </authorList>
    </citation>
    <scope>NUCLEOTIDE SEQUENCE [LARGE SCALE MRNA] (ISOFORMS 2 AND 3)</scope>
    <source>
        <tissue>Kidney</tissue>
    </source>
</reference>
<reference key="7">
    <citation type="journal article" date="2006" name="Nature">
        <title>Analysis of the DNA sequence and duplication history of human chromosome 15.</title>
        <authorList>
            <person name="Zody M.C."/>
            <person name="Garber M."/>
            <person name="Sharpe T."/>
            <person name="Young S.K."/>
            <person name="Rowen L."/>
            <person name="O'Neill K."/>
            <person name="Whittaker C.A."/>
            <person name="Kamal M."/>
            <person name="Chang J.L."/>
            <person name="Cuomo C.A."/>
            <person name="Dewar K."/>
            <person name="FitzGerald M.G."/>
            <person name="Kodira C.D."/>
            <person name="Madan A."/>
            <person name="Qin S."/>
            <person name="Yang X."/>
            <person name="Abbasi N."/>
            <person name="Abouelleil A."/>
            <person name="Arachchi H.M."/>
            <person name="Baradarani L."/>
            <person name="Birditt B."/>
            <person name="Bloom S."/>
            <person name="Bloom T."/>
            <person name="Borowsky M.L."/>
            <person name="Burke J."/>
            <person name="Butler J."/>
            <person name="Cook A."/>
            <person name="DeArellano K."/>
            <person name="DeCaprio D."/>
            <person name="Dorris L. III"/>
            <person name="Dors M."/>
            <person name="Eichler E.E."/>
            <person name="Engels R."/>
            <person name="Fahey J."/>
            <person name="Fleetwood P."/>
            <person name="Friedman C."/>
            <person name="Gearin G."/>
            <person name="Hall J.L."/>
            <person name="Hensley G."/>
            <person name="Johnson E."/>
            <person name="Jones C."/>
            <person name="Kamat A."/>
            <person name="Kaur A."/>
            <person name="Locke D.P."/>
            <person name="Madan A."/>
            <person name="Munson G."/>
            <person name="Jaffe D.B."/>
            <person name="Lui A."/>
            <person name="Macdonald P."/>
            <person name="Mauceli E."/>
            <person name="Naylor J.W."/>
            <person name="Nesbitt R."/>
            <person name="Nicol R."/>
            <person name="O'Leary S.B."/>
            <person name="Ratcliffe A."/>
            <person name="Rounsley S."/>
            <person name="She X."/>
            <person name="Sneddon K.M.B."/>
            <person name="Stewart S."/>
            <person name="Sougnez C."/>
            <person name="Stone S.M."/>
            <person name="Topham K."/>
            <person name="Vincent D."/>
            <person name="Wang S."/>
            <person name="Zimmer A.R."/>
            <person name="Birren B.W."/>
            <person name="Hood L."/>
            <person name="Lander E.S."/>
            <person name="Nusbaum C."/>
        </authorList>
    </citation>
    <scope>NUCLEOTIDE SEQUENCE [LARGE SCALE GENOMIC DNA]</scope>
</reference>
<reference key="8">
    <citation type="submission" date="2005-07" db="EMBL/GenBank/DDBJ databases">
        <authorList>
            <person name="Mural R.J."/>
            <person name="Istrail S."/>
            <person name="Sutton G.G."/>
            <person name="Florea L."/>
            <person name="Halpern A.L."/>
            <person name="Mobarry C.M."/>
            <person name="Lippert R."/>
            <person name="Walenz B."/>
            <person name="Shatkay H."/>
            <person name="Dew I."/>
            <person name="Miller J.R."/>
            <person name="Flanigan M.J."/>
            <person name="Edwards N.J."/>
            <person name="Bolanos R."/>
            <person name="Fasulo D."/>
            <person name="Halldorsson B.V."/>
            <person name="Hannenhalli S."/>
            <person name="Turner R."/>
            <person name="Yooseph S."/>
            <person name="Lu F."/>
            <person name="Nusskern D.R."/>
            <person name="Shue B.C."/>
            <person name="Zheng X.H."/>
            <person name="Zhong F."/>
            <person name="Delcher A.L."/>
            <person name="Huson D.H."/>
            <person name="Kravitz S.A."/>
            <person name="Mouchard L."/>
            <person name="Reinert K."/>
            <person name="Remington K.A."/>
            <person name="Clark A.G."/>
            <person name="Waterman M.S."/>
            <person name="Eichler E.E."/>
            <person name="Adams M.D."/>
            <person name="Hunkapiller M.W."/>
            <person name="Myers E.W."/>
            <person name="Venter J.C."/>
        </authorList>
    </citation>
    <scope>NUCLEOTIDE SEQUENCE [LARGE SCALE GENOMIC DNA]</scope>
</reference>
<reference key="9">
    <citation type="journal article" date="2004" name="Genome Res.">
        <title>The status, quality, and expansion of the NIH full-length cDNA project: the Mammalian Gene Collection (MGC).</title>
        <authorList>
            <consortium name="The MGC Project Team"/>
        </authorList>
    </citation>
    <scope>NUCLEOTIDE SEQUENCE [LARGE SCALE MRNA] (ISOFORMS 1 AND 2)</scope>
    <source>
        <tissue>Brain</tissue>
        <tissue>Kidney</tissue>
        <tissue>Spleen</tissue>
    </source>
</reference>
<reference key="10">
    <citation type="journal article" date="1991" name="Gene Expr.">
        <title>The COUP-TFs compose a family of functionally related transcription factors.</title>
        <authorList>
            <person name="Wang L.H."/>
            <person name="Ing N.H."/>
            <person name="Tsai S.Y."/>
            <person name="O'Malley B.W."/>
            <person name="Tsai M.J."/>
        </authorList>
    </citation>
    <scope>NUCLEOTIDE SEQUENCE [MRNA] OF 1-351 (ISOFORM 1)</scope>
</reference>
<reference key="11">
    <citation type="journal article" date="1997" name="J. Mol. Endocrinol.">
        <title>The nuclear orphan receptors COUP-TFII and Ear-2 act as silencers of the human oxytocin gene promoter.</title>
        <authorList>
            <person name="Chu K."/>
            <person name="Zingg H.H."/>
        </authorList>
    </citation>
    <scope>FUNCTION</scope>
</reference>
<reference key="12">
    <citation type="journal article" date="1999" name="J. Biol. Chem.">
        <title>Heterodimeric interactions between chicken ovalbumin upstream promoter-transcription factor family members ARP1 and ear2.</title>
        <authorList>
            <person name="Avram D."/>
            <person name="Ishmael J.E."/>
            <person name="Nevrivy D.J."/>
            <person name="Peterson V.J."/>
            <person name="Lee S.H."/>
            <person name="Dowell P."/>
            <person name="Leid M."/>
        </authorList>
    </citation>
    <scope>SUBUNIT</scope>
    <scope>INTERACTION WITH NR2F6</scope>
</reference>
<reference key="13">
    <citation type="journal article" date="2011" name="BMC Syst. Biol.">
        <title>Initial characterization of the human central proteome.</title>
        <authorList>
            <person name="Burkard T.R."/>
            <person name="Planyavsky M."/>
            <person name="Kaupe I."/>
            <person name="Breitwieser F.P."/>
            <person name="Buerckstuemmer T."/>
            <person name="Bennett K.L."/>
            <person name="Superti-Furga G."/>
            <person name="Colinge J."/>
        </authorList>
    </citation>
    <scope>IDENTIFICATION BY MASS SPECTROMETRY [LARGE SCALE ANALYSIS]</scope>
</reference>
<reference key="14">
    <citation type="journal article" date="2014" name="J. Proteomics">
        <title>An enzyme assisted RP-RPLC approach for in-depth analysis of human liver phosphoproteome.</title>
        <authorList>
            <person name="Bian Y."/>
            <person name="Song C."/>
            <person name="Cheng K."/>
            <person name="Dong M."/>
            <person name="Wang F."/>
            <person name="Huang J."/>
            <person name="Sun D."/>
            <person name="Wang L."/>
            <person name="Ye M."/>
            <person name="Zou H."/>
        </authorList>
    </citation>
    <scope>PHOSPHORYLATION [LARGE SCALE ANALYSIS] AT THR-51</scope>
    <scope>IDENTIFICATION BY MASS SPECTROMETRY [LARGE SCALE ANALYSIS]</scope>
    <source>
        <tissue>Liver</tissue>
    </source>
</reference>
<reference key="15">
    <citation type="journal article" date="2018" name="Am. J. Hum. Genet.">
        <title>Loss of function of the nuclear receptor NR2F2, encoding COUP-TF2, causes testis development and cardiac defects in 46,XX children.</title>
        <authorList>
            <person name="Bashamboo A."/>
            <person name="Eozenou C."/>
            <person name="Jorgensen A."/>
            <person name="Bignon-Topalovic J."/>
            <person name="Siffroi J.P."/>
            <person name="Hyon C."/>
            <person name="Tar A."/>
            <person name="Nagy P."/>
            <person name="Solyom J."/>
            <person name="Halasz Z."/>
            <person name="Paye-Jaouen A."/>
            <person name="Lambert S."/>
            <person name="Rodriguez-Buritica D."/>
            <person name="Bertalan R."/>
            <person name="Martinerie L."/>
            <person name="Rajpert-De Meyts E."/>
            <person name="Achermann J.C."/>
            <person name="McElreavey K."/>
        </authorList>
    </citation>
    <scope>FUNCTION</scope>
    <scope>TISSUE SPECIFICITY</scope>
    <scope>INVOLVEMENT IN SRXX5</scope>
</reference>
<reference key="16">
    <citation type="journal article" date="2008" name="PLoS Biol.">
        <title>Identification of COUP-TFII orphan nuclear receptor as a retinoic acid-activated receptor.</title>
        <authorList>
            <person name="Kruse S.W."/>
            <person name="Suino-Powell K."/>
            <person name="Zhou X.E."/>
            <person name="Kretschman J.E."/>
            <person name="Reynolds R."/>
            <person name="Vonrhein C."/>
            <person name="Xu Y."/>
            <person name="Wang L."/>
            <person name="Tsai S.Y."/>
            <person name="Tsai M.J."/>
            <person name="Xu H.E."/>
        </authorList>
    </citation>
    <scope>X-RAY CRYSTALLOGRAPHY (1.48 ANGSTROMS) OF 175-414</scope>
    <scope>FUNCTION</scope>
    <scope>SUBUNIT</scope>
    <scope>INTERACTION WITH NCOA1; NCOA2; NCOA3 AND PPARGC1A</scope>
    <scope>MUTAGENESIS OF ARG-228; TRP-249; SER-250; 253-PHE-VAL-254; 260-LEU-LEU-270; 364-LEU-LEU-365 AND ASP-398</scope>
</reference>
<reference key="17">
    <citation type="journal article" date="2014" name="Am. J. Hum. Genet.">
        <title>Rare variants in NR2F2 cause congenital heart defects in humans.</title>
        <authorList>
            <consortium name="UK10K Consortium"/>
            <person name="Al Turki S."/>
            <person name="Manickaraj A.K."/>
            <person name="Mercer C.L."/>
            <person name="Gerety S.S."/>
            <person name="Hitz M.P."/>
            <person name="Lindsay S."/>
            <person name="D'Alessandro L.C."/>
            <person name="Swaminathan G.J."/>
            <person name="Bentham J."/>
            <person name="Arndt A.K."/>
            <person name="Low J."/>
            <person name="Breckpot J."/>
            <person name="Gewillig M."/>
            <person name="Thienpont B."/>
            <person name="Abdul-Khaliq H."/>
            <person name="Harnack C."/>
            <person name="Hoff K."/>
            <person name="Kramer H.H."/>
            <person name="Schubert S."/>
            <person name="Siebert R."/>
            <person name="Toka O."/>
            <person name="Cosgrove C."/>
            <person name="Watkins H."/>
            <person name="Lucassen A.M."/>
            <person name="O'Kelly I.M."/>
            <person name="Salmon A.P."/>
            <person name="Bu'lock F.A."/>
            <person name="Granados-Riveron J."/>
            <person name="Setchfield K."/>
            <person name="Thornborough C."/>
            <person name="Brook J.D."/>
            <person name="Mulder B."/>
            <person name="Klaassen S."/>
            <person name="Bhattacharya S."/>
            <person name="Devriendt K."/>
            <person name="Fitzpatrick D.F."/>
            <person name="Wilson D.I."/>
            <person name="Mital S."/>
            <person name="Hurles M.E."/>
        </authorList>
    </citation>
    <scope>VARIANTS CHTD4 GLN-75 INS; VAL-170; ILE-205; ASP-251; TYR-341 AND SER-412</scope>
    <scope>CHARACTERIZATION OF VARIANTS CHTD4 GLN-75 INS; ILE-205 AND TYR-341</scope>
</reference>
<keyword id="KW-0002">3D-structure</keyword>
<keyword id="KW-0010">Activator</keyword>
<keyword id="KW-0025">Alternative splicing</keyword>
<keyword id="KW-0225">Disease variant</keyword>
<keyword id="KW-0238">DNA-binding</keyword>
<keyword id="KW-0479">Metal-binding</keyword>
<keyword id="KW-0539">Nucleus</keyword>
<keyword id="KW-0597">Phosphoprotein</keyword>
<keyword id="KW-1267">Proteomics identification</keyword>
<keyword id="KW-0675">Receptor</keyword>
<keyword id="KW-1185">Reference proteome</keyword>
<keyword id="KW-0804">Transcription</keyword>
<keyword id="KW-0805">Transcription regulation</keyword>
<keyword id="KW-0862">Zinc</keyword>
<keyword id="KW-0863">Zinc-finger</keyword>
<evidence type="ECO:0000250" key="1"/>
<evidence type="ECO:0000255" key="2">
    <source>
        <dbReference type="PROSITE-ProRule" id="PRU00407"/>
    </source>
</evidence>
<evidence type="ECO:0000255" key="3">
    <source>
        <dbReference type="PROSITE-ProRule" id="PRU01189"/>
    </source>
</evidence>
<evidence type="ECO:0000256" key="4">
    <source>
        <dbReference type="SAM" id="MobiDB-lite"/>
    </source>
</evidence>
<evidence type="ECO:0000269" key="5">
    <source>
    </source>
</evidence>
<evidence type="ECO:0000269" key="6">
    <source>
    </source>
</evidence>
<evidence type="ECO:0000269" key="7">
    <source>
    </source>
</evidence>
<evidence type="ECO:0000269" key="8">
    <source>
    </source>
</evidence>
<evidence type="ECO:0000269" key="9">
    <source>
    </source>
</evidence>
<evidence type="ECO:0000303" key="10">
    <source>
    </source>
</evidence>
<evidence type="ECO:0000303" key="11">
    <source>
    </source>
</evidence>
<evidence type="ECO:0000303" key="12">
    <source ref="4"/>
</evidence>
<evidence type="ECO:0000303" key="13">
    <source ref="6"/>
</evidence>
<evidence type="ECO:0000305" key="14"/>
<evidence type="ECO:0007744" key="15">
    <source>
    </source>
</evidence>
<evidence type="ECO:0007829" key="16">
    <source>
        <dbReference type="PDB" id="3CJW"/>
    </source>
</evidence>
<sequence>MAMVVSTWRDPQDEVPGSQGSQASQAPPVPGPPPGAPHTPQTPGQGGPASTPAQTAAGGQGGPGGPGSDKQQQQQHIECVVCGDKSSGKHYGQFTCEGCKSFFKRSVRRNLSYTCRANRNCPIDQHHRNQCQYCRLKKCLKVGMRREAVQRGRMPPTQPTHGQFALTNGDPLNCHSYLSGYISLLLRAEPYPTSRFGSQCMQPNNIMGIENICELAARMLFSAVEWARNIPFFPDLQITDQVALLRLTWSELFVLNAAQCSMPLHVAPLLAAAGLHASPMSADRVVAFMDHIRIFQEQVEKLKALHVDSAEYSCLKAIVLFTSDACGLSDVAHVESLQEKSQCALEEYVRSQYPNQPTRFGKLLLRLPSLRTVSSSVIEQLFFVRLVGKTPIETLIRDMLLSGSSFNWPYMAIQ</sequence>